<dbReference type="EMBL" id="AY940678">
    <property type="protein sequence ID" value="AAY24681.1"/>
    <property type="molecule type" value="mRNA"/>
</dbReference>
<dbReference type="SMR" id="Q32SG6"/>
<dbReference type="IntAct" id="Q32SG6">
    <property type="interactions" value="2"/>
</dbReference>
<dbReference type="STRING" id="4577.Q32SG6"/>
<dbReference type="PaxDb" id="4577-GRMZM2G428515_P01"/>
<dbReference type="InParanoid" id="Q32SG6"/>
<dbReference type="Proteomes" id="UP000007305">
    <property type="component" value="Unplaced"/>
</dbReference>
<dbReference type="ExpressionAtlas" id="Q32SG6">
    <property type="expression patterns" value="baseline and differential"/>
</dbReference>
<dbReference type="GO" id="GO:0000785">
    <property type="term" value="C:chromatin"/>
    <property type="evidence" value="ECO:0000318"/>
    <property type="project" value="GO_Central"/>
</dbReference>
<dbReference type="GO" id="GO:0000417">
    <property type="term" value="C:HIR complex"/>
    <property type="evidence" value="ECO:0000318"/>
    <property type="project" value="GO_Central"/>
</dbReference>
<dbReference type="GO" id="GO:0005634">
    <property type="term" value="C:nucleus"/>
    <property type="evidence" value="ECO:0007669"/>
    <property type="project" value="UniProtKB-SubCell"/>
</dbReference>
<dbReference type="GO" id="GO:0006338">
    <property type="term" value="P:chromatin remodeling"/>
    <property type="evidence" value="ECO:0000318"/>
    <property type="project" value="GO_Central"/>
</dbReference>
<dbReference type="GO" id="GO:0006351">
    <property type="term" value="P:DNA-templated transcription"/>
    <property type="evidence" value="ECO:0007669"/>
    <property type="project" value="InterPro"/>
</dbReference>
<dbReference type="GO" id="GO:0006355">
    <property type="term" value="P:regulation of DNA-templated transcription"/>
    <property type="evidence" value="ECO:0007669"/>
    <property type="project" value="InterPro"/>
</dbReference>
<dbReference type="CDD" id="cd00200">
    <property type="entry name" value="WD40"/>
    <property type="match status" value="1"/>
</dbReference>
<dbReference type="FunFam" id="2.130.10.10:FF:000827">
    <property type="entry name" value="Protein HIRA"/>
    <property type="match status" value="1"/>
</dbReference>
<dbReference type="Gene3D" id="2.130.10.10">
    <property type="entry name" value="YVTN repeat-like/Quinoprotein amine dehydrogenase"/>
    <property type="match status" value="2"/>
</dbReference>
<dbReference type="InterPro" id="IPR055410">
    <property type="entry name" value="CAF1B_HIR1_beta-prop"/>
</dbReference>
<dbReference type="InterPro" id="IPR031120">
    <property type="entry name" value="HIR1-like"/>
</dbReference>
<dbReference type="InterPro" id="IPR011494">
    <property type="entry name" value="HIRA-like_C"/>
</dbReference>
<dbReference type="InterPro" id="IPR015943">
    <property type="entry name" value="WD40/YVTN_repeat-like_dom_sf"/>
</dbReference>
<dbReference type="InterPro" id="IPR019775">
    <property type="entry name" value="WD40_repeat_CS"/>
</dbReference>
<dbReference type="InterPro" id="IPR036322">
    <property type="entry name" value="WD40_repeat_dom_sf"/>
</dbReference>
<dbReference type="InterPro" id="IPR001680">
    <property type="entry name" value="WD40_rpt"/>
</dbReference>
<dbReference type="PANTHER" id="PTHR13831">
    <property type="entry name" value="MEMBER OF THE HIR1 FAMILY OF WD-REPEAT PROTEINS"/>
    <property type="match status" value="1"/>
</dbReference>
<dbReference type="PANTHER" id="PTHR13831:SF7">
    <property type="entry name" value="PROTEIN HIRA"/>
    <property type="match status" value="1"/>
</dbReference>
<dbReference type="Pfam" id="PF24105">
    <property type="entry name" value="Beta-prop_CAF1B_HIR1"/>
    <property type="match status" value="1"/>
</dbReference>
<dbReference type="Pfam" id="PF07569">
    <property type="entry name" value="Hira"/>
    <property type="match status" value="1"/>
</dbReference>
<dbReference type="SMART" id="SM00320">
    <property type="entry name" value="WD40"/>
    <property type="match status" value="6"/>
</dbReference>
<dbReference type="SUPFAM" id="SSF50978">
    <property type="entry name" value="WD40 repeat-like"/>
    <property type="match status" value="2"/>
</dbReference>
<dbReference type="PROSITE" id="PS00678">
    <property type="entry name" value="WD_REPEATS_1"/>
    <property type="match status" value="1"/>
</dbReference>
<dbReference type="PROSITE" id="PS50082">
    <property type="entry name" value="WD_REPEATS_2"/>
    <property type="match status" value="4"/>
</dbReference>
<dbReference type="PROSITE" id="PS50294">
    <property type="entry name" value="WD_REPEATS_REGION"/>
    <property type="match status" value="1"/>
</dbReference>
<comment type="function">
    <text evidence="1 4">Histone chaperone involved in maintining knox genes silencing throughout leaf development.</text>
</comment>
<comment type="subunit">
    <text evidence="4">Interacts with RS2.</text>
</comment>
<comment type="interaction">
    <interactant intactId="EBI-761318">
        <id>Q32SG6</id>
    </interactant>
    <interactant intactId="EBI-761350">
        <id>Q9S7B2</id>
        <label>RS2</label>
    </interactant>
    <organismsDiffer>false</organismsDiffer>
    <experiments>2</experiments>
</comment>
<comment type="subcellular location">
    <subcellularLocation>
        <location evidence="4">Nucleus</location>
    </subcellularLocation>
</comment>
<comment type="tissue specificity">
    <text evidence="4">More abundant in apices and young leaf primordia than in fully expanded leaf tissues.</text>
</comment>
<comment type="similarity">
    <text evidence="5">Belongs to the WD repeat HIR1 family.</text>
</comment>
<keyword id="KW-0156">Chromatin regulator</keyword>
<keyword id="KW-0175">Coiled coil</keyword>
<keyword id="KW-0539">Nucleus</keyword>
<keyword id="KW-1185">Reference proteome</keyword>
<keyword id="KW-0677">Repeat</keyword>
<keyword id="KW-0678">Repressor</keyword>
<keyword id="KW-0804">Transcription</keyword>
<keyword id="KW-0805">Transcription regulation</keyword>
<keyword id="KW-0853">WD repeat</keyword>
<accession>Q32SG6</accession>
<feature type="chain" id="PRO_0000299133" description="Protein HIRA">
    <location>
        <begin position="1"/>
        <end position="964"/>
    </location>
</feature>
<feature type="repeat" description="WD 1">
    <location>
        <begin position="10"/>
        <end position="50"/>
    </location>
</feature>
<feature type="repeat" description="WD 2">
    <location>
        <begin position="64"/>
        <end position="103"/>
    </location>
</feature>
<feature type="repeat" description="WD 3">
    <location>
        <begin position="123"/>
        <end position="162"/>
    </location>
</feature>
<feature type="repeat" description="WD 4">
    <location>
        <begin position="165"/>
        <end position="204"/>
    </location>
</feature>
<feature type="repeat" description="WD 5">
    <location>
        <begin position="259"/>
        <end position="331"/>
    </location>
</feature>
<feature type="repeat" description="WD 6">
    <location>
        <begin position="335"/>
        <end position="376"/>
    </location>
</feature>
<feature type="repeat" description="WD 7">
    <location>
        <begin position="644"/>
        <end position="685"/>
    </location>
</feature>
<feature type="region of interest" description="Disordered" evidence="3">
    <location>
        <begin position="453"/>
        <end position="490"/>
    </location>
</feature>
<feature type="coiled-coil region" evidence="2">
    <location>
        <begin position="920"/>
        <end position="940"/>
    </location>
</feature>
<feature type="compositionally biased region" description="Basic and acidic residues" evidence="3">
    <location>
        <begin position="479"/>
        <end position="490"/>
    </location>
</feature>
<sequence>MILEKPSWIRHEGLQIFSIDIQTGGLRFATGGGDQKVRIWSMESVHKDNTNNDSKQRLLATLRDHFGSVNCVRWAKHGRYLASGSDDQVILIHERKAGSGTSEFGSGEPPDAENWKVIMTWRGHTADVVDLSWSPDDSTLASGSLDNTIHIWNMNNGICTAVLRGHTSLVKGVTWDPIGSFIASQSDDKTVMIWRTSDWSLAHKTEGHWTKSLGSTFFRRLAWSPCCHFITTTHGFQKPRHSAPVLERGEWAATFDFLGHNAPIVVVKFNNSTFRKNFSSDQDPKAAPVGWANGASKTPTKEQQPYNVIAIGSQDRTITVWTTASARPLFVARHFFSQSVVDLSWSPDGYSLFACSLDGSAANFHFEVKELGHRLSDSEMDEWKRNRYGDVGGRQSNLAESPAQLLLEQASAKQSAGEKVTSIVEQGKAPPKVSAGVPNPGLVVLSLEVPEVSHEDSKKTAGPTADDVKKGNQLSSPVKQREYRRPDGRKRIIPEAVGFASNQDNIPNHSQNHPVNFSSLDQRMNGTKPSYGSNSNSNNCGVKDRTSVTARANITESLVIQKASAGAGNDGRLSIEHTRSMAPSSLTPCSALSIHVINKNGNEDALPVCLEARPVERGAGDMIGVGALSTKETEIKCIKGTKTLWSDRISGKVTVLAGNANFWAVGCEDGFLQVYTRCGVRAMPAMMMGSAAVFIDCDDSWKLLLVTGRGLMYIWNLYDRACILHDSLASLVASPDESSAKDAGTVKVISATFSRCGSPLVALASRHAFLYDMSLKCWLRIADDCFPASNFASSFSFPQGGELGKLQIDIGKFMARKPIWSRVTDDGLQTRAHLENQLASSLALKSAQEYRQCLLSYVRFLAREADESRLREVCESFLGPPMGKVGSASPTDPKNLAWDPDVLGMKKHKLLKEDILPSMASNRKVQRLLNEFMDLLLEYETDVTLIPQPGTEGNGNGNDKVMTS</sequence>
<name>HIRA_MAIZE</name>
<protein>
    <recommendedName>
        <fullName>Protein HIRA</fullName>
    </recommendedName>
    <alternativeName>
        <fullName>Histone regulator protein</fullName>
    </alternativeName>
</protein>
<evidence type="ECO:0000250" key="1"/>
<evidence type="ECO:0000255" key="2"/>
<evidence type="ECO:0000256" key="3">
    <source>
        <dbReference type="SAM" id="MobiDB-lite"/>
    </source>
</evidence>
<evidence type="ECO:0000269" key="4">
    <source>
    </source>
</evidence>
<evidence type="ECO:0000305" key="5"/>
<reference key="1">
    <citation type="journal article" date="2005" name="Plant Cell">
        <title>Maize rough sheath2 and its Arabidopsis orthologue ASYMMETRIC LEAVES1 interact with HIRA, a predicted histone chaperone, to maintain knox gene silencing and determinacy during organogenesis.</title>
        <authorList>
            <person name="Phelps-Durr T.L."/>
            <person name="Thomas J."/>
            <person name="Vahab P."/>
            <person name="Timmermans M.C.P."/>
        </authorList>
    </citation>
    <scope>NUCLEOTIDE SEQUENCE [MRNA]</scope>
    <scope>FUNCTION</scope>
    <scope>TISSUE SPECIFICITY</scope>
    <scope>SUBCELLULAR LOCATION</scope>
    <scope>INTERACTION WITH RS2</scope>
    <source>
        <strain>cv. B73</strain>
        <tissue>Apices</tissue>
    </source>
</reference>
<proteinExistence type="evidence at protein level"/>
<organism>
    <name type="scientific">Zea mays</name>
    <name type="common">Maize</name>
    <dbReference type="NCBI Taxonomy" id="4577"/>
    <lineage>
        <taxon>Eukaryota</taxon>
        <taxon>Viridiplantae</taxon>
        <taxon>Streptophyta</taxon>
        <taxon>Embryophyta</taxon>
        <taxon>Tracheophyta</taxon>
        <taxon>Spermatophyta</taxon>
        <taxon>Magnoliopsida</taxon>
        <taxon>Liliopsida</taxon>
        <taxon>Poales</taxon>
        <taxon>Poaceae</taxon>
        <taxon>PACMAD clade</taxon>
        <taxon>Panicoideae</taxon>
        <taxon>Andropogonodae</taxon>
        <taxon>Andropogoneae</taxon>
        <taxon>Tripsacinae</taxon>
        <taxon>Zea</taxon>
    </lineage>
</organism>